<keyword id="KW-0238">DNA-binding</keyword>
<keyword id="KW-0804">Transcription</keyword>
<keyword id="KW-0805">Transcription regulation</keyword>
<accession>P21666</accession>
<sequence length="60" mass="7220">MGVKKEKGRKRFRKRKTFGNQILPLELLIEKNKREIINSAELMEEIYMKIDEKHTQCVTK</sequence>
<reference key="1">
    <citation type="journal article" date="1988" name="J. Gen. Microbiol.">
        <title>Cloning and nucleotide sequence of senN, a novel 'Bacillus natto' (B. subtilis) gene that regulates expression of extracellular protein genes.</title>
        <authorList>
            <person name="Wong S.-L."/>
            <person name="Wang L.-F."/>
            <person name="Doi R.H."/>
        </authorList>
    </citation>
    <scope>NUCLEOTIDE SEQUENCE [GENOMIC DNA]</scope>
</reference>
<feature type="chain" id="PRO_0000097676" description="Transcriptional regulatory protein SenN">
    <location>
        <begin position="1"/>
        <end position="60"/>
    </location>
</feature>
<feature type="DNA-binding region" description="H-T-H motif" evidence="1">
    <location>
        <begin position="11"/>
        <end position="31"/>
    </location>
</feature>
<evidence type="ECO:0000250" key="1"/>
<evidence type="ECO:0000305" key="2"/>
<name>SENN_BACNA</name>
<organism>
    <name type="scientific">Bacillus subtilis subsp. natto</name>
    <dbReference type="NCBI Taxonomy" id="86029"/>
    <lineage>
        <taxon>Bacteria</taxon>
        <taxon>Bacillati</taxon>
        <taxon>Bacillota</taxon>
        <taxon>Bacilli</taxon>
        <taxon>Bacillales</taxon>
        <taxon>Bacillaceae</taxon>
        <taxon>Bacillus</taxon>
    </lineage>
</organism>
<proteinExistence type="predicted"/>
<dbReference type="PIR" id="A34945">
    <property type="entry name" value="A34945"/>
</dbReference>
<dbReference type="SMR" id="P21666"/>
<dbReference type="GO" id="GO:0003677">
    <property type="term" value="F:DNA binding"/>
    <property type="evidence" value="ECO:0007669"/>
    <property type="project" value="UniProtKB-KW"/>
</dbReference>
<dbReference type="InterPro" id="IPR025004">
    <property type="entry name" value="SenN/SenS"/>
</dbReference>
<dbReference type="Pfam" id="PF13040">
    <property type="entry name" value="Fur_reg_FbpB"/>
    <property type="match status" value="1"/>
</dbReference>
<comment type="function">
    <text>Regulates the expression of extracellular-protein genes of Bacillus natto.</text>
</comment>
<comment type="similarity">
    <text evidence="2">To B.subtilis SenS.</text>
</comment>
<protein>
    <recommendedName>
        <fullName>Transcriptional regulatory protein SenN</fullName>
    </recommendedName>
</protein>
<gene>
    <name type="primary">senN</name>
</gene>